<organism>
    <name type="scientific">Mus musculus</name>
    <name type="common">Mouse</name>
    <dbReference type="NCBI Taxonomy" id="10090"/>
    <lineage>
        <taxon>Eukaryota</taxon>
        <taxon>Metazoa</taxon>
        <taxon>Chordata</taxon>
        <taxon>Craniata</taxon>
        <taxon>Vertebrata</taxon>
        <taxon>Euteleostomi</taxon>
        <taxon>Mammalia</taxon>
        <taxon>Eutheria</taxon>
        <taxon>Euarchontoglires</taxon>
        <taxon>Glires</taxon>
        <taxon>Rodentia</taxon>
        <taxon>Myomorpha</taxon>
        <taxon>Muroidea</taxon>
        <taxon>Muridae</taxon>
        <taxon>Murinae</taxon>
        <taxon>Mus</taxon>
        <taxon>Mus</taxon>
    </lineage>
</organism>
<proteinExistence type="evidence at transcript level"/>
<sequence>MYPNWGRYGGSSHYPPPPVPPPPPPVALPEASPGPGYSSSTAPAAPSSSGFMSFREQHLAQLQQLQQMHQKQMQCVLQPHHLPPPPLPPPPVMPGGGYGDWQPPPPPMPPPPGPALSYQKQQQYKHQMIHHQRDGPPGLVPMELESPPESPPVPPGSYMPPSQSYMPPPQPPPSYYPPSSAQPYLPPAQPGPSKPQLPPPPSIPSGNKTAIQQEPLESGAKNKTAEQKQAAPEPDPSTMTPQEQQQYWYRQHLLSLQQRTKVHLPGHKKGLVTAKDVPEPIKEEAPGPAASQVAEPLAAEKPPLPPPNEEAPPPLSPEEPQSEDSEDSEDSEEDARFKQLKAIAAHWQAAAAHWQQQQQQRVGFQYQGIMQRHTQLQQILQQYQQVIQHSPHIQTMSLDVQLRHYEMQQQQFQHLFQDWEREFQLWEEQLHSYPHKDQLQEYEKQWKTWQGHMKATQTYLQEKVNSFQTVKSQYLGNMAMPPPFVPYSQMPPPLPTMPPPVLPPSLPPPVMPPALPTSIPPPGMPPPVMPPSLPTSVPPPGMPPSLSSGPPPVLPPPALSSAGSPPVLPPPALPGGPPILPLPPLSSATPPPGIPPPGAPQGMPPQLTAPLPPASGSQNSQIPEKPRQALLPTPVSFGSTPPSPYHPPPQSEQVNSKPLNKVFSSEQGLGESSALSQSIIAAKDTPVKSGGLLADPPKGSFLEGPRGPREQKEQLQKLKDFGSEPQMADHLPPPDSRLQNPSRPGMYPPPGSYRPPPPMGKPPGSIVRPSAPPARSSIPMTRPPVPIPPPPPPPPPPPPPPPVIKSKTSSVKQERWDEDSFFGLWDTNDDQGLNSEFKRDTATIPSAPVLPPPPVHSSIPPPGPMPMGMPPMSKPPPVQHTVDYGHGRDMPTNKVEQIPYGERITLRPDPLPERSTFDADHAGQRDRYDRDRDREPYFDRPSNITDHRDFKRDRETHRDRDRDRVLDYERDRFDRERRPRDDRNQSYRDKKDHSSSRRGGFDRPSYDRKSDRPPYEGPPMFGGERRTYPEERMPLPAPALGHQPPPVPRVEKKPESKNVDDILKPPGRESRPERIVVIMRGLPGSGKTHVAKLIRDKEVEFGGPAPRVLSLDDYFIAEVEKEEKDPDSGKKVKKKVMEYEYEADMEETYRTSMFKTFKKTLDDGFFPFIILDAINDRVRHFDQFWSAAKTKGFEVYLAEMSADNQTCGKRNIHGRKLKEINKMAEHWEVAPRHMMRLDIRSLLQDAAIEEVEMEDFDANIEDQKEEKKDAEEEESELGYIPKSKWEMDTSEAKLDKLDGLRTGTKRKRDWEAIASRMEDYLQLPDDYETRASEPGKKRVRWADLEEKKDADRKRAIGFVVGQTDWEKITDESGHLAERALNRTKYI</sequence>
<evidence type="ECO:0000250" key="1"/>
<evidence type="ECO:0000250" key="2">
    <source>
        <dbReference type="UniProtKB" id="P49750"/>
    </source>
</evidence>
<evidence type="ECO:0000256" key="3">
    <source>
        <dbReference type="SAM" id="MobiDB-lite"/>
    </source>
</evidence>
<evidence type="ECO:0000269" key="4">
    <source>
    </source>
</evidence>
<evidence type="ECO:0000269" key="5">
    <source>
    </source>
</evidence>
<evidence type="ECO:0000305" key="6"/>
<feature type="chain" id="PRO_0000066299" description="YLP motif-containing protein 1">
    <location>
        <begin position="1"/>
        <end position="1386"/>
    </location>
</feature>
<feature type="region of interest" description="Disordered" evidence="3">
    <location>
        <begin position="1"/>
        <end position="336"/>
    </location>
</feature>
<feature type="region of interest" description="Disordered" evidence="3">
    <location>
        <begin position="517"/>
        <end position="1068"/>
    </location>
</feature>
<feature type="region of interest" description="Involved in interaction with PPP1CA" evidence="1">
    <location>
        <begin position="1336"/>
        <end position="1343"/>
    </location>
</feature>
<feature type="compositionally biased region" description="Pro residues" evidence="3">
    <location>
        <begin position="14"/>
        <end position="27"/>
    </location>
</feature>
<feature type="compositionally biased region" description="Low complexity" evidence="3">
    <location>
        <begin position="31"/>
        <end position="50"/>
    </location>
</feature>
<feature type="compositionally biased region" description="Low complexity" evidence="3">
    <location>
        <begin position="59"/>
        <end position="80"/>
    </location>
</feature>
<feature type="compositionally biased region" description="Pro residues" evidence="3">
    <location>
        <begin position="81"/>
        <end position="93"/>
    </location>
</feature>
<feature type="compositionally biased region" description="Pro residues" evidence="3">
    <location>
        <begin position="102"/>
        <end position="114"/>
    </location>
</feature>
<feature type="compositionally biased region" description="Pro residues" evidence="3">
    <location>
        <begin position="148"/>
        <end position="158"/>
    </location>
</feature>
<feature type="compositionally biased region" description="Pro residues" evidence="3">
    <location>
        <begin position="166"/>
        <end position="176"/>
    </location>
</feature>
<feature type="compositionally biased region" description="Pro residues" evidence="3">
    <location>
        <begin position="184"/>
        <end position="203"/>
    </location>
</feature>
<feature type="compositionally biased region" description="Polar residues" evidence="3">
    <location>
        <begin position="237"/>
        <end position="259"/>
    </location>
</feature>
<feature type="compositionally biased region" description="Basic residues" evidence="3">
    <location>
        <begin position="260"/>
        <end position="270"/>
    </location>
</feature>
<feature type="compositionally biased region" description="Basic and acidic residues" evidence="3">
    <location>
        <begin position="276"/>
        <end position="285"/>
    </location>
</feature>
<feature type="compositionally biased region" description="Pro residues" evidence="3">
    <location>
        <begin position="302"/>
        <end position="317"/>
    </location>
</feature>
<feature type="compositionally biased region" description="Acidic residues" evidence="3">
    <location>
        <begin position="320"/>
        <end position="333"/>
    </location>
</feature>
<feature type="compositionally biased region" description="Pro residues" evidence="3">
    <location>
        <begin position="517"/>
        <end position="558"/>
    </location>
</feature>
<feature type="compositionally biased region" description="Pro residues" evidence="3">
    <location>
        <begin position="566"/>
        <end position="603"/>
    </location>
</feature>
<feature type="compositionally biased region" description="Pro residues" evidence="3">
    <location>
        <begin position="641"/>
        <end position="650"/>
    </location>
</feature>
<feature type="compositionally biased region" description="Polar residues" evidence="3">
    <location>
        <begin position="651"/>
        <end position="667"/>
    </location>
</feature>
<feature type="compositionally biased region" description="Basic and acidic residues" evidence="3">
    <location>
        <begin position="706"/>
        <end position="722"/>
    </location>
</feature>
<feature type="compositionally biased region" description="Pro residues" evidence="3">
    <location>
        <begin position="746"/>
        <end position="761"/>
    </location>
</feature>
<feature type="compositionally biased region" description="Low complexity" evidence="3">
    <location>
        <begin position="762"/>
        <end position="779"/>
    </location>
</feature>
<feature type="compositionally biased region" description="Pro residues" evidence="3">
    <location>
        <begin position="781"/>
        <end position="803"/>
    </location>
</feature>
<feature type="compositionally biased region" description="Pro residues" evidence="3">
    <location>
        <begin position="848"/>
        <end position="878"/>
    </location>
</feature>
<feature type="compositionally biased region" description="Basic and acidic residues" evidence="3">
    <location>
        <begin position="904"/>
        <end position="938"/>
    </location>
</feature>
<feature type="compositionally biased region" description="Basic and acidic residues" evidence="3">
    <location>
        <begin position="945"/>
        <end position="1014"/>
    </location>
</feature>
<feature type="compositionally biased region" description="Basic and acidic residues" evidence="3">
    <location>
        <begin position="1023"/>
        <end position="1033"/>
    </location>
</feature>
<feature type="compositionally biased region" description="Basic and acidic residues" evidence="3">
    <location>
        <begin position="1049"/>
        <end position="1068"/>
    </location>
</feature>
<feature type="modified residue" description="N6-methyllysine" evidence="2">
    <location>
        <position position="683"/>
    </location>
</feature>
<feature type="cross-link" description="Glycyl lysine isopeptide (Lys-Gly) (interchain with G-Cter in SUMO2)" evidence="2">
    <location>
        <position position="894"/>
    </location>
</feature>
<feature type="cross-link" description="Glycyl lysine isopeptide (Lys-Gly) (interchain with G-Cter in SUMO2)" evidence="2">
    <location>
        <position position="951"/>
    </location>
</feature>
<feature type="sequence conflict" description="In Ref. 1; BAA85182." evidence="6" ref="1">
    <original>C</original>
    <variation>S</variation>
    <location>
        <position position="75"/>
    </location>
</feature>
<feature type="sequence conflict" description="In Ref. 1; BAA85182." evidence="6" ref="1">
    <original>G</original>
    <variation>S</variation>
    <location>
        <position position="191"/>
    </location>
</feature>
<feature type="sequence conflict" description="In Ref. 1; BAA85182." evidence="6" ref="1">
    <original>I</original>
    <variation>T</variation>
    <location>
        <position position="1280"/>
    </location>
</feature>
<protein>
    <recommendedName>
        <fullName>YLP motif-containing protein 1</fullName>
    </recommendedName>
    <alternativeName>
        <fullName>Nuclear protein ZAP3</fullName>
    </alternativeName>
</protein>
<gene>
    <name type="primary">Ylpm1</name>
    <name type="synonym">Zap</name>
    <name type="synonym">Zap3</name>
</gene>
<reference key="1">
    <citation type="journal article" date="2000" name="Proc. Natl. Acad. Sci. U.S.A.">
        <title>A method to identify cDNAs based on localization of green fluorescent protein fusion products.</title>
        <authorList>
            <person name="Misawa K."/>
            <person name="Nosaka T."/>
            <person name="Morita S."/>
            <person name="Kaneko A."/>
            <person name="Nakahata T."/>
            <person name="Asano S."/>
            <person name="Kitamura T."/>
        </authorList>
    </citation>
    <scope>NUCLEOTIDE SEQUENCE [MRNA]</scope>
    <scope>SUBCELLULAR LOCATION</scope>
    <source>
        <tissue>Fetal liver</tissue>
    </source>
</reference>
<reference key="2">
    <citation type="journal article" date="2009" name="PLoS Biol.">
        <title>Lineage-specific biology revealed by a finished genome assembly of the mouse.</title>
        <authorList>
            <person name="Church D.M."/>
            <person name="Goodstadt L."/>
            <person name="Hillier L.W."/>
            <person name="Zody M.C."/>
            <person name="Goldstein S."/>
            <person name="She X."/>
            <person name="Bult C.J."/>
            <person name="Agarwala R."/>
            <person name="Cherry J.L."/>
            <person name="DiCuccio M."/>
            <person name="Hlavina W."/>
            <person name="Kapustin Y."/>
            <person name="Meric P."/>
            <person name="Maglott D."/>
            <person name="Birtle Z."/>
            <person name="Marques A.C."/>
            <person name="Graves T."/>
            <person name="Zhou S."/>
            <person name="Teague B."/>
            <person name="Potamousis K."/>
            <person name="Churas C."/>
            <person name="Place M."/>
            <person name="Herschleb J."/>
            <person name="Runnheim R."/>
            <person name="Forrest D."/>
            <person name="Amos-Landgraf J."/>
            <person name="Schwartz D.C."/>
            <person name="Cheng Z."/>
            <person name="Lindblad-Toh K."/>
            <person name="Eichler E.E."/>
            <person name="Ponting C.P."/>
        </authorList>
    </citation>
    <scope>NUCLEOTIDE SEQUENCE [LARGE SCALE GENOMIC DNA]</scope>
    <source>
        <strain>C57BL/6J</strain>
    </source>
</reference>
<reference key="3">
    <citation type="journal article" date="2004" name="Genome Res.">
        <title>The status, quality, and expansion of the NIH full-length cDNA project: the Mammalian Gene Collection (MGC).</title>
        <authorList>
            <consortium name="The MGC Project Team"/>
        </authorList>
    </citation>
    <scope>NUCLEOTIDE SEQUENCE [LARGE SCALE MRNA] OF 1303-1386</scope>
    <source>
        <tissue>Mammary tumor</tissue>
    </source>
</reference>
<reference key="4">
    <citation type="journal article" date="2004" name="Mech. Dev.">
        <title>A role for nucleoprotein Zap3 in the reduction of telomerase activity during embryonic stem cell differentiation.</title>
        <authorList>
            <person name="Armstrong L."/>
            <person name="Lako M."/>
            <person name="van Herpe I."/>
            <person name="Evans J."/>
            <person name="Saretzki G."/>
            <person name="Hole N."/>
        </authorList>
    </citation>
    <scope>FUNCTION</scope>
    <scope>DEVELOPMENTAL STAGE</scope>
</reference>
<name>YLPM1_MOUSE</name>
<dbReference type="EMBL" id="AB033168">
    <property type="protein sequence ID" value="BAA85182.1"/>
    <property type="molecule type" value="mRNA"/>
</dbReference>
<dbReference type="EMBL" id="AC127582">
    <property type="status" value="NOT_ANNOTATED_CDS"/>
    <property type="molecule type" value="Genomic_DNA"/>
</dbReference>
<dbReference type="EMBL" id="AC155811">
    <property type="status" value="NOT_ANNOTATED_CDS"/>
    <property type="molecule type" value="Genomic_DNA"/>
</dbReference>
<dbReference type="EMBL" id="CR974585">
    <property type="status" value="NOT_ANNOTATED_CDS"/>
    <property type="molecule type" value="Genomic_DNA"/>
</dbReference>
<dbReference type="EMBL" id="BC055465">
    <property type="protein sequence ID" value="AAH55465.1"/>
    <property type="status" value="ALT_INIT"/>
    <property type="molecule type" value="mRNA"/>
</dbReference>
<dbReference type="SMR" id="Q9R0I7"/>
<dbReference type="FunCoup" id="Q9R0I7">
    <property type="interactions" value="4608"/>
</dbReference>
<dbReference type="IntAct" id="Q9R0I7">
    <property type="interactions" value="5"/>
</dbReference>
<dbReference type="GlyGen" id="Q9R0I7">
    <property type="glycosylation" value="3 sites, 1 O-linked glycan (3 sites)"/>
</dbReference>
<dbReference type="iPTMnet" id="Q9R0I7"/>
<dbReference type="PhosphoSitePlus" id="Q9R0I7"/>
<dbReference type="jPOST" id="Q9R0I7"/>
<dbReference type="PeptideAtlas" id="Q9R0I7"/>
<dbReference type="ProteomicsDB" id="275227"/>
<dbReference type="Pumba" id="Q9R0I7"/>
<dbReference type="Antibodypedia" id="62380">
    <property type="antibodies" value="17 antibodies from 7 providers"/>
</dbReference>
<dbReference type="Ensembl" id="ENSMUST00000101202.10">
    <property type="protein sequence ID" value="ENSMUSP00000098763.4"/>
    <property type="gene ID" value="ENSMUSG00000021244.16"/>
</dbReference>
<dbReference type="AGR" id="MGI:1926195"/>
<dbReference type="MGI" id="MGI:1926195">
    <property type="gene designation" value="Ylpm1"/>
</dbReference>
<dbReference type="VEuPathDB" id="HostDB:ENSMUSG00000021244"/>
<dbReference type="eggNOG" id="KOG2400">
    <property type="taxonomic scope" value="Eukaryota"/>
</dbReference>
<dbReference type="GeneTree" id="ENSGT00440000039837"/>
<dbReference type="HOGENOM" id="CLU_001969_0_0_1"/>
<dbReference type="InParanoid" id="Q9R0I7"/>
<dbReference type="ChiTaRS" id="Ylpm1">
    <property type="organism name" value="mouse"/>
</dbReference>
<dbReference type="PRO" id="PR:Q9R0I7"/>
<dbReference type="Proteomes" id="UP000000589">
    <property type="component" value="Chromosome 12"/>
</dbReference>
<dbReference type="RNAct" id="Q9R0I7">
    <property type="molecule type" value="protein"/>
</dbReference>
<dbReference type="Bgee" id="ENSMUSG00000021244">
    <property type="expression patterns" value="Expressed in saccule of membranous labyrinth and 263 other cell types or tissues"/>
</dbReference>
<dbReference type="ExpressionAtlas" id="Q9R0I7">
    <property type="expression patterns" value="baseline and differential"/>
</dbReference>
<dbReference type="GO" id="GO:0016607">
    <property type="term" value="C:nuclear speck"/>
    <property type="evidence" value="ECO:0007669"/>
    <property type="project" value="UniProtKB-SubCell"/>
</dbReference>
<dbReference type="GO" id="GO:0005634">
    <property type="term" value="C:nucleus"/>
    <property type="evidence" value="ECO:0000314"/>
    <property type="project" value="MGI"/>
</dbReference>
<dbReference type="GO" id="GO:0001227">
    <property type="term" value="F:DNA-binding transcription repressor activity, RNA polymerase II-specific"/>
    <property type="evidence" value="ECO:0000314"/>
    <property type="project" value="MGI"/>
</dbReference>
<dbReference type="GO" id="GO:0000122">
    <property type="term" value="P:negative regulation of transcription by RNA polymerase II"/>
    <property type="evidence" value="ECO:0000314"/>
    <property type="project" value="MGI"/>
</dbReference>
<dbReference type="GO" id="GO:0032204">
    <property type="term" value="P:regulation of telomere maintenance"/>
    <property type="evidence" value="ECO:0000314"/>
    <property type="project" value="MGI"/>
</dbReference>
<dbReference type="FunFam" id="3.40.50.300:FF:000399">
    <property type="entry name" value="YLP motif containing 1"/>
    <property type="match status" value="1"/>
</dbReference>
<dbReference type="Gene3D" id="3.40.50.300">
    <property type="entry name" value="P-loop containing nucleotide triphosphate hydrolases"/>
    <property type="match status" value="1"/>
</dbReference>
<dbReference type="InterPro" id="IPR027417">
    <property type="entry name" value="P-loop_NTPase"/>
</dbReference>
<dbReference type="InterPro" id="IPR026314">
    <property type="entry name" value="YLP_motif_con_p1"/>
</dbReference>
<dbReference type="PANTHER" id="PTHR13413">
    <property type="entry name" value="YLP MOTIF CONTAINING PROTEIN NUCLEAR PROTEIN ZAP"/>
    <property type="match status" value="1"/>
</dbReference>
<dbReference type="PANTHER" id="PTHR13413:SF0">
    <property type="entry name" value="YLP MOTIF-CONTAINING PROTEIN 1"/>
    <property type="match status" value="1"/>
</dbReference>
<dbReference type="Pfam" id="PF13671">
    <property type="entry name" value="AAA_33"/>
    <property type="match status" value="1"/>
</dbReference>
<dbReference type="SUPFAM" id="SSF52540">
    <property type="entry name" value="P-loop containing nucleoside triphosphate hydrolases"/>
    <property type="match status" value="1"/>
</dbReference>
<keyword id="KW-1017">Isopeptide bond</keyword>
<keyword id="KW-0488">Methylation</keyword>
<keyword id="KW-0539">Nucleus</keyword>
<keyword id="KW-1185">Reference proteome</keyword>
<keyword id="KW-0678">Repressor</keyword>
<keyword id="KW-0804">Transcription</keyword>
<keyword id="KW-0805">Transcription regulation</keyword>
<keyword id="KW-0832">Ubl conjugation</keyword>
<comment type="function">
    <text evidence="5">Plays a role in the reduction of telomerase activity during differentiation of embryonic stem cells by binding to the core promoter of TERT and controlling its down-regulation.</text>
</comment>
<comment type="subunit">
    <text evidence="1">Interacts with PPP1CA and NCOA5. Forms a complex with ILF2, ILF3, KHDRBS1, RBMX, NCOA5 and PPP1CA (By similarity).</text>
</comment>
<comment type="subcellular location">
    <subcellularLocation>
        <location evidence="1">Nucleus</location>
    </subcellularLocation>
    <subcellularLocation>
        <location evidence="4">Nucleus speckle</location>
    </subcellularLocation>
    <text evidence="1">Migrates to nucleolar caps upon blockage of transcription.</text>
</comment>
<comment type="developmental stage">
    <text evidence="5">Expressed in the 7.5 dpc embryos.</text>
</comment>
<comment type="sequence caution" evidence="6">
    <conflict type="erroneous initiation">
        <sequence resource="EMBL-CDS" id="AAH55465"/>
    </conflict>
</comment>
<accession>Q9R0I7</accession>
<accession>E9QKY3</accession>
<accession>Q7TMM4</accession>